<organism>
    <name type="scientific">Cutibacterium acnes (strain DSM 16379 / KPA171202)</name>
    <name type="common">Propionibacterium acnes</name>
    <dbReference type="NCBI Taxonomy" id="267747"/>
    <lineage>
        <taxon>Bacteria</taxon>
        <taxon>Bacillati</taxon>
        <taxon>Actinomycetota</taxon>
        <taxon>Actinomycetes</taxon>
        <taxon>Propionibacteriales</taxon>
        <taxon>Propionibacteriaceae</taxon>
        <taxon>Cutibacterium</taxon>
    </lineage>
</organism>
<keyword id="KW-1003">Cell membrane</keyword>
<keyword id="KW-0342">GTP-binding</keyword>
<keyword id="KW-0378">Hydrolase</keyword>
<keyword id="KW-0472">Membrane</keyword>
<keyword id="KW-0547">Nucleotide-binding</keyword>
<keyword id="KW-0648">Protein biosynthesis</keyword>
<accession>Q6A9B2</accession>
<feature type="chain" id="PRO_0000176319" description="Elongation factor 4">
    <location>
        <begin position="1"/>
        <end position="611"/>
    </location>
</feature>
<feature type="domain" description="tr-type G">
    <location>
        <begin position="12"/>
        <end position="193"/>
    </location>
</feature>
<feature type="binding site" evidence="1">
    <location>
        <begin position="24"/>
        <end position="29"/>
    </location>
    <ligand>
        <name>GTP</name>
        <dbReference type="ChEBI" id="CHEBI:37565"/>
    </ligand>
</feature>
<feature type="binding site" evidence="1">
    <location>
        <begin position="140"/>
        <end position="143"/>
    </location>
    <ligand>
        <name>GTP</name>
        <dbReference type="ChEBI" id="CHEBI:37565"/>
    </ligand>
</feature>
<evidence type="ECO:0000255" key="1">
    <source>
        <dbReference type="HAMAP-Rule" id="MF_00071"/>
    </source>
</evidence>
<proteinExistence type="inferred from homology"/>
<gene>
    <name evidence="1" type="primary">lepA</name>
    <name type="ordered locus">PPA0901</name>
</gene>
<sequence>MSAPQPGSTDPAVIRNFCIIAHIDHGKSTLADRMLQITGVLDERSARAQYLDRMDIERERGITIKSQAVRMPWEVDGVTHLLNMIDTPGHVDFSYEVSRSLQACEGAILLVDAAQGIEAQTLANLYLALEADLEIIPVLNKIDLPGAESDRHAAEIAGIIGCDESEVLRVSAKTGEGVSDLLDTIVAKVPAPEGVADAPARALIFDSVYDTYRGVVTYVRVVDGALRHREKILMMSTGAAHEVLEIGVISPEMVPAQGLSVGEVGYLITGVKDVRQSRVGDTVTNASKPSEKDLGGYQHPKPMVYSGLFPIDAKDFPDLRDALDKLQLNDAALVYEPETSTALGFGFRVGFLGLLHMEIVRERLEREFDLDLISTAPSVVHHVLMEDGSTVAVTNPSEYPTSGRIAEVREPIVDATILSPAEYIGTILELCQQRRGVQQGLDYLSSDRVEIRYRLPLSEIVFDFFDQLKSRTKGYASLDYHEAGEQAADLVKVDILLNGDPVDALSSIVHRDKSYSYGVAMAAKLKELIPRQQFEVPVQAAIGARVIARETIRAVRKDVLAKCYGGDISRKRKLLEKQKAGKKRMKVVGSVEVPQEAFVAALRTGESTEKK</sequence>
<reference key="1">
    <citation type="journal article" date="2004" name="Science">
        <title>The complete genome sequence of Propionibacterium acnes, a commensal of human skin.</title>
        <authorList>
            <person name="Brueggemann H."/>
            <person name="Henne A."/>
            <person name="Hoster F."/>
            <person name="Liesegang H."/>
            <person name="Wiezer A."/>
            <person name="Strittmatter A."/>
            <person name="Hujer S."/>
            <person name="Duerre P."/>
            <person name="Gottschalk G."/>
        </authorList>
    </citation>
    <scope>NUCLEOTIDE SEQUENCE [LARGE SCALE GENOMIC DNA]</scope>
    <source>
        <strain>DSM 16379 / KPA171202</strain>
    </source>
</reference>
<dbReference type="EC" id="3.6.5.n1" evidence="1"/>
<dbReference type="EMBL" id="AE017283">
    <property type="protein sequence ID" value="AAT82654.1"/>
    <property type="molecule type" value="Genomic_DNA"/>
</dbReference>
<dbReference type="SMR" id="Q6A9B2"/>
<dbReference type="EnsemblBacteria" id="AAT82654">
    <property type="protein sequence ID" value="AAT82654"/>
    <property type="gene ID" value="PPA0901"/>
</dbReference>
<dbReference type="KEGG" id="pac:PPA0901"/>
<dbReference type="eggNOG" id="COG0481">
    <property type="taxonomic scope" value="Bacteria"/>
</dbReference>
<dbReference type="HOGENOM" id="CLU_009995_3_3_11"/>
<dbReference type="Proteomes" id="UP000000603">
    <property type="component" value="Chromosome"/>
</dbReference>
<dbReference type="GO" id="GO:0005886">
    <property type="term" value="C:plasma membrane"/>
    <property type="evidence" value="ECO:0007669"/>
    <property type="project" value="UniProtKB-SubCell"/>
</dbReference>
<dbReference type="GO" id="GO:0005525">
    <property type="term" value="F:GTP binding"/>
    <property type="evidence" value="ECO:0007669"/>
    <property type="project" value="UniProtKB-UniRule"/>
</dbReference>
<dbReference type="GO" id="GO:0003924">
    <property type="term" value="F:GTPase activity"/>
    <property type="evidence" value="ECO:0007669"/>
    <property type="project" value="UniProtKB-UniRule"/>
</dbReference>
<dbReference type="GO" id="GO:0043022">
    <property type="term" value="F:ribosome binding"/>
    <property type="evidence" value="ECO:0007669"/>
    <property type="project" value="UniProtKB-UniRule"/>
</dbReference>
<dbReference type="GO" id="GO:0003746">
    <property type="term" value="F:translation elongation factor activity"/>
    <property type="evidence" value="ECO:0007669"/>
    <property type="project" value="UniProtKB-UniRule"/>
</dbReference>
<dbReference type="GO" id="GO:0045727">
    <property type="term" value="P:positive regulation of translation"/>
    <property type="evidence" value="ECO:0007669"/>
    <property type="project" value="UniProtKB-UniRule"/>
</dbReference>
<dbReference type="CDD" id="cd03699">
    <property type="entry name" value="EF4_II"/>
    <property type="match status" value="1"/>
</dbReference>
<dbReference type="CDD" id="cd16260">
    <property type="entry name" value="EF4_III"/>
    <property type="match status" value="1"/>
</dbReference>
<dbReference type="CDD" id="cd01890">
    <property type="entry name" value="LepA"/>
    <property type="match status" value="1"/>
</dbReference>
<dbReference type="CDD" id="cd03709">
    <property type="entry name" value="lepA_C"/>
    <property type="match status" value="1"/>
</dbReference>
<dbReference type="FunFam" id="3.40.50.300:FF:000078">
    <property type="entry name" value="Elongation factor 4"/>
    <property type="match status" value="1"/>
</dbReference>
<dbReference type="FunFam" id="2.40.30.10:FF:000015">
    <property type="entry name" value="Translation factor GUF1, mitochondrial"/>
    <property type="match status" value="1"/>
</dbReference>
<dbReference type="FunFam" id="3.30.70.240:FF:000007">
    <property type="entry name" value="Translation factor GUF1, mitochondrial"/>
    <property type="match status" value="1"/>
</dbReference>
<dbReference type="FunFam" id="3.30.70.2570:FF:000001">
    <property type="entry name" value="Translation factor GUF1, mitochondrial"/>
    <property type="match status" value="1"/>
</dbReference>
<dbReference type="FunFam" id="3.30.70.870:FF:000004">
    <property type="entry name" value="Translation factor GUF1, mitochondrial"/>
    <property type="match status" value="1"/>
</dbReference>
<dbReference type="Gene3D" id="3.30.70.240">
    <property type="match status" value="1"/>
</dbReference>
<dbReference type="Gene3D" id="3.30.70.2570">
    <property type="entry name" value="Elongation factor 4, C-terminal domain"/>
    <property type="match status" value="1"/>
</dbReference>
<dbReference type="Gene3D" id="3.30.70.870">
    <property type="entry name" value="Elongation Factor G (Translational Gtpase), domain 3"/>
    <property type="match status" value="1"/>
</dbReference>
<dbReference type="Gene3D" id="3.40.50.300">
    <property type="entry name" value="P-loop containing nucleotide triphosphate hydrolases"/>
    <property type="match status" value="1"/>
</dbReference>
<dbReference type="Gene3D" id="2.40.30.10">
    <property type="entry name" value="Translation factors"/>
    <property type="match status" value="1"/>
</dbReference>
<dbReference type="HAMAP" id="MF_00071">
    <property type="entry name" value="LepA"/>
    <property type="match status" value="1"/>
</dbReference>
<dbReference type="InterPro" id="IPR006297">
    <property type="entry name" value="EF-4"/>
</dbReference>
<dbReference type="InterPro" id="IPR035647">
    <property type="entry name" value="EFG_III/V"/>
</dbReference>
<dbReference type="InterPro" id="IPR000640">
    <property type="entry name" value="EFG_V-like"/>
</dbReference>
<dbReference type="InterPro" id="IPR004161">
    <property type="entry name" value="EFTu-like_2"/>
</dbReference>
<dbReference type="InterPro" id="IPR031157">
    <property type="entry name" value="G_TR_CS"/>
</dbReference>
<dbReference type="InterPro" id="IPR038363">
    <property type="entry name" value="LepA_C_sf"/>
</dbReference>
<dbReference type="InterPro" id="IPR013842">
    <property type="entry name" value="LepA_CTD"/>
</dbReference>
<dbReference type="InterPro" id="IPR035654">
    <property type="entry name" value="LepA_IV"/>
</dbReference>
<dbReference type="InterPro" id="IPR027417">
    <property type="entry name" value="P-loop_NTPase"/>
</dbReference>
<dbReference type="InterPro" id="IPR005225">
    <property type="entry name" value="Small_GTP-bd"/>
</dbReference>
<dbReference type="InterPro" id="IPR000795">
    <property type="entry name" value="T_Tr_GTP-bd_dom"/>
</dbReference>
<dbReference type="NCBIfam" id="TIGR01393">
    <property type="entry name" value="lepA"/>
    <property type="match status" value="1"/>
</dbReference>
<dbReference type="NCBIfam" id="TIGR00231">
    <property type="entry name" value="small_GTP"/>
    <property type="match status" value="1"/>
</dbReference>
<dbReference type="PANTHER" id="PTHR43512:SF4">
    <property type="entry name" value="TRANSLATION FACTOR GUF1 HOMOLOG, CHLOROPLASTIC"/>
    <property type="match status" value="1"/>
</dbReference>
<dbReference type="PANTHER" id="PTHR43512">
    <property type="entry name" value="TRANSLATION FACTOR GUF1-RELATED"/>
    <property type="match status" value="1"/>
</dbReference>
<dbReference type="Pfam" id="PF00679">
    <property type="entry name" value="EFG_C"/>
    <property type="match status" value="1"/>
</dbReference>
<dbReference type="Pfam" id="PF00009">
    <property type="entry name" value="GTP_EFTU"/>
    <property type="match status" value="1"/>
</dbReference>
<dbReference type="Pfam" id="PF03144">
    <property type="entry name" value="GTP_EFTU_D2"/>
    <property type="match status" value="1"/>
</dbReference>
<dbReference type="Pfam" id="PF06421">
    <property type="entry name" value="LepA_C"/>
    <property type="match status" value="1"/>
</dbReference>
<dbReference type="PRINTS" id="PR00315">
    <property type="entry name" value="ELONGATNFCT"/>
</dbReference>
<dbReference type="SMART" id="SM00838">
    <property type="entry name" value="EFG_C"/>
    <property type="match status" value="1"/>
</dbReference>
<dbReference type="SUPFAM" id="SSF54980">
    <property type="entry name" value="EF-G C-terminal domain-like"/>
    <property type="match status" value="2"/>
</dbReference>
<dbReference type="SUPFAM" id="SSF52540">
    <property type="entry name" value="P-loop containing nucleoside triphosphate hydrolases"/>
    <property type="match status" value="1"/>
</dbReference>
<dbReference type="PROSITE" id="PS00301">
    <property type="entry name" value="G_TR_1"/>
    <property type="match status" value="1"/>
</dbReference>
<dbReference type="PROSITE" id="PS51722">
    <property type="entry name" value="G_TR_2"/>
    <property type="match status" value="1"/>
</dbReference>
<comment type="function">
    <text evidence="1">Required for accurate and efficient protein synthesis under certain stress conditions. May act as a fidelity factor of the translation reaction, by catalyzing a one-codon backward translocation of tRNAs on improperly translocated ribosomes. Back-translocation proceeds from a post-translocation (POST) complex to a pre-translocation (PRE) complex, thus giving elongation factor G a second chance to translocate the tRNAs correctly. Binds to ribosomes in a GTP-dependent manner.</text>
</comment>
<comment type="catalytic activity">
    <reaction evidence="1">
        <text>GTP + H2O = GDP + phosphate + H(+)</text>
        <dbReference type="Rhea" id="RHEA:19669"/>
        <dbReference type="ChEBI" id="CHEBI:15377"/>
        <dbReference type="ChEBI" id="CHEBI:15378"/>
        <dbReference type="ChEBI" id="CHEBI:37565"/>
        <dbReference type="ChEBI" id="CHEBI:43474"/>
        <dbReference type="ChEBI" id="CHEBI:58189"/>
        <dbReference type="EC" id="3.6.5.n1"/>
    </reaction>
</comment>
<comment type="subcellular location">
    <subcellularLocation>
        <location evidence="1">Cell membrane</location>
        <topology evidence="1">Peripheral membrane protein</topology>
        <orientation evidence="1">Cytoplasmic side</orientation>
    </subcellularLocation>
</comment>
<comment type="similarity">
    <text evidence="1">Belongs to the TRAFAC class translation factor GTPase superfamily. Classic translation factor GTPase family. LepA subfamily.</text>
</comment>
<protein>
    <recommendedName>
        <fullName evidence="1">Elongation factor 4</fullName>
        <shortName evidence="1">EF-4</shortName>
        <ecNumber evidence="1">3.6.5.n1</ecNumber>
    </recommendedName>
    <alternativeName>
        <fullName evidence="1">Ribosomal back-translocase LepA</fullName>
    </alternativeName>
</protein>
<name>LEPA_CUTAK</name>